<organism>
    <name type="scientific">Escherichia fergusonii (strain ATCC 35469 / DSM 13698 / CCUG 18766 / IAM 14443 / JCM 21226 / LMG 7866 / NBRC 102419 / NCTC 12128 / CDC 0568-73)</name>
    <dbReference type="NCBI Taxonomy" id="585054"/>
    <lineage>
        <taxon>Bacteria</taxon>
        <taxon>Pseudomonadati</taxon>
        <taxon>Pseudomonadota</taxon>
        <taxon>Gammaproteobacteria</taxon>
        <taxon>Enterobacterales</taxon>
        <taxon>Enterobacteriaceae</taxon>
        <taxon>Escherichia</taxon>
    </lineage>
</organism>
<reference key="1">
    <citation type="journal article" date="2009" name="PLoS Genet.">
        <title>Organised genome dynamics in the Escherichia coli species results in highly diverse adaptive paths.</title>
        <authorList>
            <person name="Touchon M."/>
            <person name="Hoede C."/>
            <person name="Tenaillon O."/>
            <person name="Barbe V."/>
            <person name="Baeriswyl S."/>
            <person name="Bidet P."/>
            <person name="Bingen E."/>
            <person name="Bonacorsi S."/>
            <person name="Bouchier C."/>
            <person name="Bouvet O."/>
            <person name="Calteau A."/>
            <person name="Chiapello H."/>
            <person name="Clermont O."/>
            <person name="Cruveiller S."/>
            <person name="Danchin A."/>
            <person name="Diard M."/>
            <person name="Dossat C."/>
            <person name="Karoui M.E."/>
            <person name="Frapy E."/>
            <person name="Garry L."/>
            <person name="Ghigo J.M."/>
            <person name="Gilles A.M."/>
            <person name="Johnson J."/>
            <person name="Le Bouguenec C."/>
            <person name="Lescat M."/>
            <person name="Mangenot S."/>
            <person name="Martinez-Jehanne V."/>
            <person name="Matic I."/>
            <person name="Nassif X."/>
            <person name="Oztas S."/>
            <person name="Petit M.A."/>
            <person name="Pichon C."/>
            <person name="Rouy Z."/>
            <person name="Ruf C.S."/>
            <person name="Schneider D."/>
            <person name="Tourret J."/>
            <person name="Vacherie B."/>
            <person name="Vallenet D."/>
            <person name="Medigue C."/>
            <person name="Rocha E.P.C."/>
            <person name="Denamur E."/>
        </authorList>
    </citation>
    <scope>NUCLEOTIDE SEQUENCE [LARGE SCALE GENOMIC DNA]</scope>
    <source>
        <strain>ATCC 35469 / DSM 13698 / BCRC 15582 / CCUG 18766 / IAM 14443 / JCM 21226 / LMG 7866 / NBRC 102419 / NCTC 12128 / CDC 0568-73</strain>
    </source>
</reference>
<dbReference type="EMBL" id="CU928158">
    <property type="protein sequence ID" value="CAQ89863.1"/>
    <property type="molecule type" value="Genomic_DNA"/>
</dbReference>
<dbReference type="RefSeq" id="WP_015953573.1">
    <property type="nucleotide sequence ID" value="NC_011740.1"/>
</dbReference>
<dbReference type="SMR" id="B7LKL8"/>
<dbReference type="GeneID" id="75056602"/>
<dbReference type="KEGG" id="efe:EFER_2364"/>
<dbReference type="HOGENOM" id="CLU_047123_0_0_6"/>
<dbReference type="OrthoDB" id="9802240at2"/>
<dbReference type="Proteomes" id="UP000000745">
    <property type="component" value="Chromosome"/>
</dbReference>
<dbReference type="GO" id="GO:0042597">
    <property type="term" value="C:periplasmic space"/>
    <property type="evidence" value="ECO:0007669"/>
    <property type="project" value="UniProtKB-SubCell"/>
</dbReference>
<dbReference type="GO" id="GO:0051301">
    <property type="term" value="P:cell division"/>
    <property type="evidence" value="ECO:0007669"/>
    <property type="project" value="UniProtKB-UniRule"/>
</dbReference>
<dbReference type="GO" id="GO:0017038">
    <property type="term" value="P:protein import"/>
    <property type="evidence" value="ECO:0007669"/>
    <property type="project" value="InterPro"/>
</dbReference>
<dbReference type="FunFam" id="2.120.10.30:FF:000022">
    <property type="entry name" value="Tol-Pal system protein TolB"/>
    <property type="match status" value="1"/>
</dbReference>
<dbReference type="Gene3D" id="2.120.10.30">
    <property type="entry name" value="TolB, C-terminal domain"/>
    <property type="match status" value="1"/>
</dbReference>
<dbReference type="Gene3D" id="3.40.50.10070">
    <property type="entry name" value="TolB, N-terminal domain"/>
    <property type="match status" value="1"/>
</dbReference>
<dbReference type="HAMAP" id="MF_00671">
    <property type="entry name" value="TolB"/>
    <property type="match status" value="1"/>
</dbReference>
<dbReference type="InterPro" id="IPR011042">
    <property type="entry name" value="6-blade_b-propeller_TolB-like"/>
</dbReference>
<dbReference type="InterPro" id="IPR011659">
    <property type="entry name" value="PD40"/>
</dbReference>
<dbReference type="InterPro" id="IPR014167">
    <property type="entry name" value="Tol-Pal_TolB"/>
</dbReference>
<dbReference type="InterPro" id="IPR007195">
    <property type="entry name" value="TolB_N"/>
</dbReference>
<dbReference type="NCBIfam" id="TIGR02800">
    <property type="entry name" value="propeller_TolB"/>
    <property type="match status" value="1"/>
</dbReference>
<dbReference type="PANTHER" id="PTHR36842:SF1">
    <property type="entry name" value="PROTEIN TOLB"/>
    <property type="match status" value="1"/>
</dbReference>
<dbReference type="PANTHER" id="PTHR36842">
    <property type="entry name" value="PROTEIN TOLB HOMOLOG"/>
    <property type="match status" value="1"/>
</dbReference>
<dbReference type="Pfam" id="PF07676">
    <property type="entry name" value="PD40"/>
    <property type="match status" value="4"/>
</dbReference>
<dbReference type="Pfam" id="PF04052">
    <property type="entry name" value="TolB_N"/>
    <property type="match status" value="1"/>
</dbReference>
<dbReference type="SUPFAM" id="SSF52964">
    <property type="entry name" value="TolB, N-terminal domain"/>
    <property type="match status" value="1"/>
</dbReference>
<dbReference type="SUPFAM" id="SSF69304">
    <property type="entry name" value="Tricorn protease N-terminal domain"/>
    <property type="match status" value="1"/>
</dbReference>
<sequence length="430" mass="46251">MKQALRVAFGFLMLWAAMLHAEVRIVIDGGVDSGRPIGVVPFKWAGPGAAPEDIGGIVSDDLRYSGKFNPLDRARLPQQPASAQEVQPAAWSALAIDAVVVGQVTPNPDGSYNVTYQLVDTGGAPGTVLAQNSFKVNKQWLRYAAHTVSDEVFEKLTGIKGAFRTRLAYVVQTNGGQFPYELRVSDYDGYNPFVVHRSPQPLMSPAWSPDGSKLAYVTFESGRSELVIQTLANGAIRKVASFPRHNGAPAFSPDGSKLAFALSKTGSLNLYVMDLASGQIRQITDGRSNNTEPTWFPDSQNLAFTSDQAGRPQVYKVNINGGAPQRITWEGTQNQDADVSSDGKFMVMVSSDGGKQHIAKQDLVTGGVQVLSSTFLDETPSLAPNGTMVIYSSSQGMGSVLNLVSTDGRFKARLPATDGQVKFPAWSPYL</sequence>
<feature type="signal peptide" evidence="1">
    <location>
        <begin position="1"/>
        <end position="21"/>
    </location>
</feature>
<feature type="chain" id="PRO_1000131529" description="Tol-Pal system protein TolB" evidence="1">
    <location>
        <begin position="22"/>
        <end position="430"/>
    </location>
</feature>
<accession>B7LKL8</accession>
<proteinExistence type="inferred from homology"/>
<name>TOLB_ESCF3</name>
<keyword id="KW-0131">Cell cycle</keyword>
<keyword id="KW-0132">Cell division</keyword>
<keyword id="KW-0574">Periplasm</keyword>
<keyword id="KW-0732">Signal</keyword>
<gene>
    <name evidence="1" type="primary">tolB</name>
    <name type="ordered locus">EFER_2364</name>
</gene>
<evidence type="ECO:0000255" key="1">
    <source>
        <dbReference type="HAMAP-Rule" id="MF_00671"/>
    </source>
</evidence>
<protein>
    <recommendedName>
        <fullName evidence="1">Tol-Pal system protein TolB</fullName>
    </recommendedName>
</protein>
<comment type="function">
    <text evidence="1">Part of the Tol-Pal system, which plays a role in outer membrane invagination during cell division and is important for maintaining outer membrane integrity. TolB occupies a key intermediary position in the Tol-Pal system because it communicates directly with both membrane-embedded components, Pal in the outer membrane and TolA in the inner membrane.</text>
</comment>
<comment type="subunit">
    <text evidence="1">The Tol-Pal system is composed of five core proteins: the inner membrane proteins TolA, TolQ and TolR, the periplasmic protein TolB and the outer membrane protein Pal. They form a network linking the inner and outer membranes and the peptidoglycan layer.</text>
</comment>
<comment type="subcellular location">
    <subcellularLocation>
        <location evidence="1">Periplasm</location>
    </subcellularLocation>
</comment>
<comment type="similarity">
    <text evidence="1">Belongs to the TolB family.</text>
</comment>